<evidence type="ECO:0000250" key="1">
    <source>
        <dbReference type="UniProtKB" id="B5HDJ6"/>
    </source>
</evidence>
<evidence type="ECO:0000269" key="2">
    <source>
    </source>
</evidence>
<evidence type="ECO:0000303" key="3">
    <source>
    </source>
</evidence>
<evidence type="ECO:0000305" key="4"/>
<evidence type="ECO:0000305" key="5">
    <source>
    </source>
</evidence>
<gene>
    <name evidence="3" type="primary">MTPSL4</name>
</gene>
<dbReference type="EC" id="4.2.3.184" evidence="2"/>
<dbReference type="EC" id="4.2.3.72" evidence="2"/>
<dbReference type="EMBL" id="KU664191">
    <property type="protein sequence ID" value="APP91789.1"/>
    <property type="molecule type" value="mRNA"/>
</dbReference>
<dbReference type="SMR" id="A0A1L5YKS7"/>
<dbReference type="KEGG" id="ag:APP91789"/>
<dbReference type="BRENDA" id="4.2.3.184">
    <property type="organism ID" value="3182"/>
</dbReference>
<dbReference type="UniPathway" id="UPA00213"/>
<dbReference type="GO" id="GO:0046872">
    <property type="term" value="F:metal ion binding"/>
    <property type="evidence" value="ECO:0007669"/>
    <property type="project" value="UniProtKB-KW"/>
</dbReference>
<dbReference type="GO" id="GO:0010333">
    <property type="term" value="F:terpene synthase activity"/>
    <property type="evidence" value="ECO:0007669"/>
    <property type="project" value="InterPro"/>
</dbReference>
<dbReference type="GO" id="GO:0016114">
    <property type="term" value="P:terpenoid biosynthetic process"/>
    <property type="evidence" value="ECO:0007669"/>
    <property type="project" value="UniProtKB-UniPathway"/>
</dbReference>
<dbReference type="Gene3D" id="1.10.600.10">
    <property type="entry name" value="Farnesyl Diphosphate Synthase"/>
    <property type="match status" value="1"/>
</dbReference>
<dbReference type="InterPro" id="IPR008949">
    <property type="entry name" value="Isoprenoid_synthase_dom_sf"/>
</dbReference>
<dbReference type="InterPro" id="IPR034686">
    <property type="entry name" value="Terpene_cyclase-like_2"/>
</dbReference>
<dbReference type="PANTHER" id="PTHR35201:SF4">
    <property type="entry name" value="BETA-PINACENE SYNTHASE-RELATED"/>
    <property type="match status" value="1"/>
</dbReference>
<dbReference type="PANTHER" id="PTHR35201">
    <property type="entry name" value="TERPENE SYNTHASE"/>
    <property type="match status" value="1"/>
</dbReference>
<dbReference type="Pfam" id="PF19086">
    <property type="entry name" value="Terpene_syn_C_2"/>
    <property type="match status" value="1"/>
</dbReference>
<dbReference type="SUPFAM" id="SSF48576">
    <property type="entry name" value="Terpenoid synthases"/>
    <property type="match status" value="1"/>
</dbReference>
<comment type="function">
    <text evidence="2 5">Catalyzes the conversion of (2E,6E)-farnesyl diphosphate (FPP) into the sesquiterpene alcohols (-)-alpha-gurjunene and 5-hydroxy-alpha-gurjunene (PubMed:27650333). Other unidentified sesquiterpene alcohols found to be catalyzed by MTPSL4 may arise from carbocation reaction intermediates along the catalytic cascade to gurjunene being quenched by a water molecule, yielding formation of the alcohols (Probable).</text>
</comment>
<comment type="catalytic activity">
    <reaction evidence="2">
        <text>(2E,6E)-farnesyl diphosphate = (-)-alpha-gurjunene + diphosphate</text>
        <dbReference type="Rhea" id="RHEA:29507"/>
        <dbReference type="ChEBI" id="CHEBI:33019"/>
        <dbReference type="ChEBI" id="CHEBI:61699"/>
        <dbReference type="ChEBI" id="CHEBI:175763"/>
        <dbReference type="EC" id="4.2.3.72"/>
    </reaction>
    <physiologicalReaction direction="right-to-left" evidence="2">
        <dbReference type="Rhea" id="RHEA:29509"/>
    </physiologicalReaction>
</comment>
<comment type="catalytic activity">
    <reaction evidence="2">
        <text>(2E,6E)-farnesyl diphosphate + H2O = 5-hydroxy-alpha-gurjunene + diphosphate</text>
        <dbReference type="Rhea" id="RHEA:54380"/>
        <dbReference type="ChEBI" id="CHEBI:15377"/>
        <dbReference type="ChEBI" id="CHEBI:33019"/>
        <dbReference type="ChEBI" id="CHEBI:138167"/>
        <dbReference type="ChEBI" id="CHEBI:175763"/>
        <dbReference type="EC" id="4.2.3.184"/>
    </reaction>
    <physiologicalReaction direction="left-to-right" evidence="2">
        <dbReference type="Rhea" id="RHEA:54381"/>
    </physiologicalReaction>
</comment>
<comment type="cofactor">
    <cofactor evidence="1">
        <name>Mg(2+)</name>
        <dbReference type="ChEBI" id="CHEBI:18420"/>
    </cofactor>
    <text evidence="1">Binds 3 Mg(2+) ions per subunit.</text>
</comment>
<comment type="biophysicochemical properties">
    <kinetics>
        <KM evidence="2">17.98 uM for (2E,6E)-farnesyl diphosphate</KM>
        <Vmax evidence="2">1.146 pmol/sec/ug enzyme</Vmax>
        <text evidence="2">kcat is 0.058 sec(-1) with (2E,6E)-farnesyl diphosphate as substrate.</text>
    </kinetics>
</comment>
<comment type="pathway">
    <text evidence="4">Secondary metabolite biosynthesis; terpenoid biosynthesis.</text>
</comment>
<comment type="similarity">
    <text evidence="4">Belongs to the terpene synthase family.</text>
</comment>
<sequence length="431" mass="50271">MAPTLDSDSTVLSIRSDFRQGRVQRQLKSELYRNDNRMSVENDFRAPYIQLPYPQARLNPKTTECMNITFDWLSSMGIDKQVDPSVWQAFVASRLSDIVGYSCNEDIEPEDFLWLCKFTTWLFIFDSMMDDGHWAENICMSSHAILEMNLILMWNDPENERLLECSKSILDLVMAIDASGSRLQLDKFHADMVDARKKSKSLLDVKMGVFTSAFRDCWMEYVEDVPAEYTTRIAQTFQRYISSCLWEEKNRKEQAECMNVADYVTLRRFSGCVEPYFVYVDRIIEHKRRKSPISHIPNTLFYGEHMQNMLAAATDVICWHNDIFSFPKETIREGDKHNLVYTVFQQYNCHSCTQAGELIVELLHDRIAEMEFAYEKLRSAAAPEFHPAIDVYIKNCRDWISGSHEFHMNSSRYNVRSFSGPPENVKHINSV</sequence>
<keyword id="KW-0456">Lyase</keyword>
<keyword id="KW-0460">Magnesium</keyword>
<keyword id="KW-0479">Metal-binding</keyword>
<organism>
    <name type="scientific">Marchantia polymorpha</name>
    <name type="common">Common liverwort</name>
    <name type="synonym">Marchantia aquatica</name>
    <dbReference type="NCBI Taxonomy" id="3197"/>
    <lineage>
        <taxon>Eukaryota</taxon>
        <taxon>Viridiplantae</taxon>
        <taxon>Streptophyta</taxon>
        <taxon>Embryophyta</taxon>
        <taxon>Marchantiophyta</taxon>
        <taxon>Marchantiopsida</taxon>
        <taxon>Marchantiidae</taxon>
        <taxon>Marchantiales</taxon>
        <taxon>Marchantiaceae</taxon>
        <taxon>Marchantia</taxon>
    </lineage>
</organism>
<protein>
    <recommendedName>
        <fullName evidence="3">Alpha-gurjunene synthase</fullName>
        <ecNumber evidence="2">4.2.3.184</ecNumber>
        <ecNumber evidence="2">4.2.3.72</ecNumber>
    </recommendedName>
    <alternativeName>
        <fullName evidence="3">5-hydroxy-alpha-gurjunene synthase</fullName>
    </alternativeName>
    <alternativeName>
        <fullName evidence="3">Microbial terpene synthase-like 4</fullName>
        <shortName evidence="3">MpMTPSL4</shortName>
    </alternativeName>
    <alternativeName>
        <fullName evidence="4">Sesquiterpene synthase</fullName>
    </alternativeName>
</protein>
<name>MTSL4_MARPO</name>
<feature type="chain" id="PRO_0000449918" description="Alpha-gurjunene synthase">
    <location>
        <begin position="1"/>
        <end position="431"/>
    </location>
</feature>
<feature type="binding site" evidence="1">
    <location>
        <position position="126"/>
    </location>
    <ligand>
        <name>Mg(2+)</name>
        <dbReference type="ChEBI" id="CHEBI:18420"/>
        <label>1</label>
    </ligand>
</feature>
<feature type="binding site" evidence="1">
    <location>
        <position position="130"/>
    </location>
    <ligand>
        <name>Mg(2+)</name>
        <dbReference type="ChEBI" id="CHEBI:18420"/>
        <label>1</label>
    </ligand>
</feature>
<feature type="binding site" evidence="1">
    <location>
        <position position="130"/>
    </location>
    <ligand>
        <name>Mg(2+)</name>
        <dbReference type="ChEBI" id="CHEBI:18420"/>
        <label>2</label>
    </ligand>
</feature>
<feature type="binding site" evidence="1">
    <location>
        <position position="267"/>
    </location>
    <ligand>
        <name>(2E,6E)-farnesyl diphosphate</name>
        <dbReference type="ChEBI" id="CHEBI:175763"/>
    </ligand>
</feature>
<feature type="binding site" evidence="1">
    <location>
        <position position="321"/>
    </location>
    <ligand>
        <name>Mg(2+)</name>
        <dbReference type="ChEBI" id="CHEBI:18420"/>
        <label>3</label>
    </ligand>
</feature>
<feature type="binding site" evidence="1">
    <location>
        <position position="325"/>
    </location>
    <ligand>
        <name>Mg(2+)</name>
        <dbReference type="ChEBI" id="CHEBI:18420"/>
        <label>3</label>
    </ligand>
</feature>
<feature type="binding site" evidence="1">
    <location>
        <position position="328"/>
    </location>
    <ligand>
        <name>(2E,6E)-farnesyl diphosphate</name>
        <dbReference type="ChEBI" id="CHEBI:175763"/>
    </ligand>
</feature>
<feature type="binding site" evidence="1">
    <location>
        <position position="329"/>
    </location>
    <ligand>
        <name>Mg(2+)</name>
        <dbReference type="ChEBI" id="CHEBI:18420"/>
        <label>3</label>
    </ligand>
</feature>
<feature type="binding site" evidence="1">
    <location>
        <begin position="412"/>
        <end position="413"/>
    </location>
    <ligand>
        <name>(2E,6E)-farnesyl diphosphate</name>
        <dbReference type="ChEBI" id="CHEBI:175763"/>
    </ligand>
</feature>
<reference key="1">
    <citation type="journal article" date="2016" name="Plant Cell">
        <title>Molecular diversity of terpene synthases in the liverwort Marchantia polymorpha.</title>
        <authorList>
            <person name="Kumar S."/>
            <person name="Kempinski C."/>
            <person name="Zhuang X."/>
            <person name="Norris A."/>
            <person name="Mafu S."/>
            <person name="Zi J."/>
            <person name="Bell S.A."/>
            <person name="Nybo S.E."/>
            <person name="Kinison S.E."/>
            <person name="Jiang Z."/>
            <person name="Goklany S."/>
            <person name="Linscott K.B."/>
            <person name="Chen X."/>
            <person name="Jia Q."/>
            <person name="Brown S.D."/>
            <person name="Bowman J.L."/>
            <person name="Babbitt P.C."/>
            <person name="Peters R.J."/>
            <person name="Chen F."/>
            <person name="Chappell J."/>
        </authorList>
    </citation>
    <scope>NUCLEOTIDE SEQUENCE [MRNA]</scope>
    <scope>FUNCTION</scope>
    <scope>CATALYTIC ACTIVITY</scope>
    <scope>BIOPHYSICOCHEMICAL PROPERTIES</scope>
</reference>
<proteinExistence type="evidence at protein level"/>
<accession>A0A1L5YKS7</accession>